<comment type="catalytic activity">
    <reaction evidence="1">
        <text>urea + 2 H2O + H(+) = hydrogencarbonate + 2 NH4(+)</text>
        <dbReference type="Rhea" id="RHEA:20557"/>
        <dbReference type="ChEBI" id="CHEBI:15377"/>
        <dbReference type="ChEBI" id="CHEBI:15378"/>
        <dbReference type="ChEBI" id="CHEBI:16199"/>
        <dbReference type="ChEBI" id="CHEBI:17544"/>
        <dbReference type="ChEBI" id="CHEBI:28938"/>
        <dbReference type="EC" id="3.5.1.5"/>
    </reaction>
</comment>
<comment type="cofactor">
    <cofactor evidence="1">
        <name>Ni cation</name>
        <dbReference type="ChEBI" id="CHEBI:25516"/>
    </cofactor>
    <text evidence="1">Binds 2 nickel ions per subunit.</text>
</comment>
<comment type="pathway">
    <text evidence="1">Nitrogen metabolism; urea degradation; CO(2) and NH(3) from urea (urease route): step 1/1.</text>
</comment>
<comment type="subunit">
    <text evidence="1">Heterotrimer of UreA (gamma), UreB (beta) and UreC (alpha) subunits. Three heterotrimers associate to form the active enzyme.</text>
</comment>
<comment type="subcellular location">
    <subcellularLocation>
        <location evidence="1">Cytoplasm</location>
    </subcellularLocation>
</comment>
<comment type="PTM">
    <text evidence="1">Carboxylation allows a single lysine to coordinate two nickel ions.</text>
</comment>
<comment type="similarity">
    <text evidence="1">Belongs to the metallo-dependent hydrolases superfamily. Urease alpha subunit family.</text>
</comment>
<accession>P42873</accession>
<organism>
    <name type="scientific">Staphylococcus xylosus</name>
    <dbReference type="NCBI Taxonomy" id="1288"/>
    <lineage>
        <taxon>Bacteria</taxon>
        <taxon>Bacillati</taxon>
        <taxon>Bacillota</taxon>
        <taxon>Bacilli</taxon>
        <taxon>Bacillales</taxon>
        <taxon>Staphylococcaceae</taxon>
        <taxon>Staphylococcus</taxon>
    </lineage>
</organism>
<evidence type="ECO:0000255" key="1">
    <source>
        <dbReference type="HAMAP-Rule" id="MF_01953"/>
    </source>
</evidence>
<evidence type="ECO:0000269" key="2">
    <source>
    </source>
</evidence>
<protein>
    <recommendedName>
        <fullName evidence="1">Urease subunit alpha</fullName>
        <ecNumber evidence="1">3.5.1.5</ecNumber>
    </recommendedName>
    <alternativeName>
        <fullName evidence="1">Urea amidohydrolase subunit alpha</fullName>
    </alternativeName>
</protein>
<reference key="1">
    <citation type="journal article" date="1994" name="Arch. Microbiol.">
        <title>Threonine is present instead of cysteine at the active site of urease from Staphylococcus xylosus.</title>
        <authorList>
            <person name="Jose J."/>
            <person name="Schaefer U.K."/>
            <person name="Kaltwasser H."/>
        </authorList>
    </citation>
    <scope>NUCLEOTIDE SEQUENCE [GENOMIC DNA]</scope>
    <scope>PROTEIN SEQUENCE OF 2-6</scope>
    <source>
        <strain>DSM 20267 / Isolate C2A</strain>
    </source>
</reference>
<feature type="initiator methionine" description="Removed" evidence="2">
    <location>
        <position position="1"/>
    </location>
</feature>
<feature type="chain" id="PRO_0000067560" description="Urease subunit alpha">
    <location>
        <begin position="2"/>
        <end position="571"/>
    </location>
</feature>
<feature type="domain" description="Urease" evidence="1">
    <location>
        <begin position="133"/>
        <end position="571"/>
    </location>
</feature>
<feature type="active site" description="Proton donor" evidence="1">
    <location>
        <position position="324"/>
    </location>
</feature>
<feature type="binding site" evidence="1">
    <location>
        <position position="138"/>
    </location>
    <ligand>
        <name>Ni(2+)</name>
        <dbReference type="ChEBI" id="CHEBI:49786"/>
        <label>1</label>
    </ligand>
</feature>
<feature type="binding site" evidence="1">
    <location>
        <position position="140"/>
    </location>
    <ligand>
        <name>Ni(2+)</name>
        <dbReference type="ChEBI" id="CHEBI:49786"/>
        <label>1</label>
    </ligand>
</feature>
<feature type="binding site" description="via carbamate group" evidence="1">
    <location>
        <position position="221"/>
    </location>
    <ligand>
        <name>Ni(2+)</name>
        <dbReference type="ChEBI" id="CHEBI:49786"/>
        <label>1</label>
    </ligand>
</feature>
<feature type="binding site" description="via carbamate group" evidence="1">
    <location>
        <position position="221"/>
    </location>
    <ligand>
        <name>Ni(2+)</name>
        <dbReference type="ChEBI" id="CHEBI:49786"/>
        <label>2</label>
    </ligand>
</feature>
<feature type="binding site" evidence="1">
    <location>
        <position position="223"/>
    </location>
    <ligand>
        <name>substrate</name>
    </ligand>
</feature>
<feature type="binding site" evidence="1">
    <location>
        <position position="250"/>
    </location>
    <ligand>
        <name>Ni(2+)</name>
        <dbReference type="ChEBI" id="CHEBI:49786"/>
        <label>2</label>
    </ligand>
</feature>
<feature type="binding site" evidence="1">
    <location>
        <position position="276"/>
    </location>
    <ligand>
        <name>Ni(2+)</name>
        <dbReference type="ChEBI" id="CHEBI:49786"/>
        <label>2</label>
    </ligand>
</feature>
<feature type="binding site" evidence="1">
    <location>
        <position position="364"/>
    </location>
    <ligand>
        <name>Ni(2+)</name>
        <dbReference type="ChEBI" id="CHEBI:49786"/>
        <label>1</label>
    </ligand>
</feature>
<feature type="modified residue" description="N6-carboxylysine" evidence="1">
    <location>
        <position position="221"/>
    </location>
</feature>
<keyword id="KW-0963">Cytoplasm</keyword>
<keyword id="KW-0903">Direct protein sequencing</keyword>
<keyword id="KW-0378">Hydrolase</keyword>
<keyword id="KW-0479">Metal-binding</keyword>
<keyword id="KW-0533">Nickel</keyword>
<name>URE1_STAXY</name>
<gene>
    <name evidence="1" type="primary">ureC</name>
</gene>
<dbReference type="EC" id="3.5.1.5" evidence="1"/>
<dbReference type="EMBL" id="X74600">
    <property type="protein sequence ID" value="CAA52680.1"/>
    <property type="molecule type" value="Genomic_DNA"/>
</dbReference>
<dbReference type="PIR" id="S38485">
    <property type="entry name" value="S38485"/>
</dbReference>
<dbReference type="SMR" id="P42873"/>
<dbReference type="STRING" id="1288.AWC37_10765"/>
<dbReference type="MEROPS" id="M38.982"/>
<dbReference type="eggNOG" id="COG0804">
    <property type="taxonomic scope" value="Bacteria"/>
</dbReference>
<dbReference type="UniPathway" id="UPA00258">
    <property type="reaction ID" value="UER00370"/>
</dbReference>
<dbReference type="GO" id="GO:0005737">
    <property type="term" value="C:cytoplasm"/>
    <property type="evidence" value="ECO:0007669"/>
    <property type="project" value="UniProtKB-SubCell"/>
</dbReference>
<dbReference type="GO" id="GO:0016151">
    <property type="term" value="F:nickel cation binding"/>
    <property type="evidence" value="ECO:0007669"/>
    <property type="project" value="UniProtKB-UniRule"/>
</dbReference>
<dbReference type="GO" id="GO:0009039">
    <property type="term" value="F:urease activity"/>
    <property type="evidence" value="ECO:0007669"/>
    <property type="project" value="UniProtKB-UniRule"/>
</dbReference>
<dbReference type="GO" id="GO:0043419">
    <property type="term" value="P:urea catabolic process"/>
    <property type="evidence" value="ECO:0007669"/>
    <property type="project" value="UniProtKB-UniRule"/>
</dbReference>
<dbReference type="CDD" id="cd00375">
    <property type="entry name" value="Urease_alpha"/>
    <property type="match status" value="1"/>
</dbReference>
<dbReference type="Gene3D" id="3.20.20.140">
    <property type="entry name" value="Metal-dependent hydrolases"/>
    <property type="match status" value="1"/>
</dbReference>
<dbReference type="Gene3D" id="2.30.40.10">
    <property type="entry name" value="Urease, subunit C, domain 1"/>
    <property type="match status" value="1"/>
</dbReference>
<dbReference type="HAMAP" id="MF_01953">
    <property type="entry name" value="Urease_alpha"/>
    <property type="match status" value="1"/>
</dbReference>
<dbReference type="InterPro" id="IPR006680">
    <property type="entry name" value="Amidohydro-rel"/>
</dbReference>
<dbReference type="InterPro" id="IPR011059">
    <property type="entry name" value="Metal-dep_hydrolase_composite"/>
</dbReference>
<dbReference type="InterPro" id="IPR032466">
    <property type="entry name" value="Metal_Hydrolase"/>
</dbReference>
<dbReference type="InterPro" id="IPR011612">
    <property type="entry name" value="Urease_alpha_N_dom"/>
</dbReference>
<dbReference type="InterPro" id="IPR050112">
    <property type="entry name" value="Urease_alpha_subunit"/>
</dbReference>
<dbReference type="InterPro" id="IPR017950">
    <property type="entry name" value="Urease_AS"/>
</dbReference>
<dbReference type="InterPro" id="IPR005848">
    <property type="entry name" value="Urease_asu"/>
</dbReference>
<dbReference type="InterPro" id="IPR017951">
    <property type="entry name" value="Urease_asu_c"/>
</dbReference>
<dbReference type="InterPro" id="IPR029754">
    <property type="entry name" value="Urease_Ni-bd"/>
</dbReference>
<dbReference type="NCBIfam" id="NF009686">
    <property type="entry name" value="PRK13207.1"/>
    <property type="match status" value="1"/>
</dbReference>
<dbReference type="NCBIfam" id="TIGR01792">
    <property type="entry name" value="urease_alph"/>
    <property type="match status" value="1"/>
</dbReference>
<dbReference type="PANTHER" id="PTHR43440">
    <property type="entry name" value="UREASE"/>
    <property type="match status" value="1"/>
</dbReference>
<dbReference type="PANTHER" id="PTHR43440:SF1">
    <property type="entry name" value="UREASE"/>
    <property type="match status" value="1"/>
</dbReference>
<dbReference type="Pfam" id="PF01979">
    <property type="entry name" value="Amidohydro_1"/>
    <property type="match status" value="1"/>
</dbReference>
<dbReference type="Pfam" id="PF00449">
    <property type="entry name" value="Urease_alpha"/>
    <property type="match status" value="1"/>
</dbReference>
<dbReference type="PRINTS" id="PR01752">
    <property type="entry name" value="UREASE"/>
</dbReference>
<dbReference type="SUPFAM" id="SSF51338">
    <property type="entry name" value="Composite domain of metallo-dependent hydrolases"/>
    <property type="match status" value="1"/>
</dbReference>
<dbReference type="SUPFAM" id="SSF51556">
    <property type="entry name" value="Metallo-dependent hydrolases"/>
    <property type="match status" value="1"/>
</dbReference>
<dbReference type="PROSITE" id="PS01120">
    <property type="entry name" value="UREASE_1"/>
    <property type="match status" value="1"/>
</dbReference>
<dbReference type="PROSITE" id="PS00145">
    <property type="entry name" value="UREASE_2"/>
    <property type="match status" value="1"/>
</dbReference>
<dbReference type="PROSITE" id="PS51368">
    <property type="entry name" value="UREASE_3"/>
    <property type="match status" value="1"/>
</dbReference>
<proteinExistence type="evidence at protein level"/>
<sequence>MSFKMTQSQYTSLYGPTVGDSVRLGDTNLFARVEKDYATYGDEAAFGGGKSIRDGMAQNPNVTRDDKQVADLVITNALILDYDKIVKADIGVKNGYIMKIGKAGNPDIMDNVDIIIGATTDIISAEGKIVTAGGIDTHVHFVNPEQSQVALESGITTHIGGGTGASEGAKATTVTPGPWHLHRMLLAAESLPLNIGFTGKGQAVNHTALVEQIHAGAIGLKVHEDWGATPSALDHALQVADDYDVQIALHADTLNEAGFMEETMAAVKDRVLHMYHTEGAGGGHAPDLIKSAAYSNILPSSTNPTLPYTVNTIDEHLDMVMITHHLNASIPEDIAFADSRIRKETIAAEDVLQDIGVFSMVSSDSQAMGRVGEVITRTWQVAHRMKEQRGSLDGDSEYNDNNRIKRYIAKYTINPAITHGISDYVGSIDEGKLADIIMWEPAFFAVKPDVIVKGGLINPAINGDANGSIPTSEPLKYRKMYGQLGGNMQGTSMTFVSTTAYENDIGKLLGLKRKLRPVHNIRKLTKADMKNNSATPKIDVDPQTYEVFVDGEKITSEPATELPLTQRYFLF</sequence>